<organism>
    <name type="scientific">Lactobacillus delbrueckii subsp. bulgaricus (strain ATCC 11842 / DSM 20081 / BCRC 10696 / JCM 1002 / NBRC 13953 / NCIMB 11778 / NCTC 12712 / WDCM 00102 / Lb 14)</name>
    <dbReference type="NCBI Taxonomy" id="390333"/>
    <lineage>
        <taxon>Bacteria</taxon>
        <taxon>Bacillati</taxon>
        <taxon>Bacillota</taxon>
        <taxon>Bacilli</taxon>
        <taxon>Lactobacillales</taxon>
        <taxon>Lactobacillaceae</taxon>
        <taxon>Lactobacillus</taxon>
    </lineage>
</organism>
<sequence>MTAAGLLIAIGIVYGDIGTSPLYVMKSVIAGNGGINTVGRDLIIGTISLILWTVTLLTTVQTVIIALRATNHGEGGIFALYALIRKKAAWLVWPALIGGAAILADGTLTPAVTVTTAIEGLKGLEFGKGNVPVSNQTTVLVITIVILLVLFSIQRMGTRIIGKAFGPIMLVWFAFLGVMGLINIGGNWWILQALNPYYAIKLLFSPYNKAGFAILGSIFLATTGAEALYSDVGHVGKGNIIGSWPFVFVCLSLNYFGQGVWILNNTNMHSATEINPFYAMIPENIRLASIVLATLAAIIASQALITGSFTLVAESINLKFLPRMNILYPSDERGQIYIPAVNKMLGITTIALVLFFRTSAHMEAAYGLSITISMLTTTILLYEWLVLKQGHNLANLLFVIFFSTINILFMGSSLSKFTHGGYVSLLITLLIASVMVVWYFGNKVRDQNGAGNAYVRLDEYTDMLTNLSHDDNYPTYSDNLVYMANVKYNKFIKREILYSILDKRPKRARAYWFVTVNVTNEPFTAEYAVNTFGTKNVINIQLYLGFKKQTSVNVYLRQIVHDLIKDNTIEAQPQEYTTTPGRDVGDFKFVIVNDVISPSTTLSSYKKWLVKARVQLQNLSLNPAQWFGLEFADMVIERVPLILGKQEHERIKRVAPVDYSKTSLNKK</sequence>
<accession>Q1GBZ5</accession>
<keyword id="KW-1003">Cell membrane</keyword>
<keyword id="KW-0406">Ion transport</keyword>
<keyword id="KW-0472">Membrane</keyword>
<keyword id="KW-0630">Potassium</keyword>
<keyword id="KW-0633">Potassium transport</keyword>
<keyword id="KW-1185">Reference proteome</keyword>
<keyword id="KW-0769">Symport</keyword>
<keyword id="KW-0812">Transmembrane</keyword>
<keyword id="KW-1133">Transmembrane helix</keyword>
<keyword id="KW-0813">Transport</keyword>
<protein>
    <recommendedName>
        <fullName evidence="1">Probable potassium transport system protein Kup</fullName>
    </recommendedName>
</protein>
<dbReference type="EMBL" id="CR954253">
    <property type="protein sequence ID" value="CAI97059.1"/>
    <property type="molecule type" value="Genomic_DNA"/>
</dbReference>
<dbReference type="STRING" id="390333.Ldb0219"/>
<dbReference type="KEGG" id="ldb:Ldb0219"/>
<dbReference type="eggNOG" id="COG3158">
    <property type="taxonomic scope" value="Bacteria"/>
</dbReference>
<dbReference type="HOGENOM" id="CLU_008142_4_1_9"/>
<dbReference type="Proteomes" id="UP000001259">
    <property type="component" value="Chromosome"/>
</dbReference>
<dbReference type="GO" id="GO:0005886">
    <property type="term" value="C:plasma membrane"/>
    <property type="evidence" value="ECO:0007669"/>
    <property type="project" value="UniProtKB-SubCell"/>
</dbReference>
<dbReference type="GO" id="GO:0015079">
    <property type="term" value="F:potassium ion transmembrane transporter activity"/>
    <property type="evidence" value="ECO:0007669"/>
    <property type="project" value="UniProtKB-UniRule"/>
</dbReference>
<dbReference type="GO" id="GO:0015293">
    <property type="term" value="F:symporter activity"/>
    <property type="evidence" value="ECO:0007669"/>
    <property type="project" value="UniProtKB-UniRule"/>
</dbReference>
<dbReference type="HAMAP" id="MF_01522">
    <property type="entry name" value="Kup"/>
    <property type="match status" value="1"/>
</dbReference>
<dbReference type="InterPro" id="IPR003855">
    <property type="entry name" value="K+_transporter"/>
</dbReference>
<dbReference type="InterPro" id="IPR053952">
    <property type="entry name" value="K_trans_C"/>
</dbReference>
<dbReference type="InterPro" id="IPR053951">
    <property type="entry name" value="K_trans_N"/>
</dbReference>
<dbReference type="InterPro" id="IPR023051">
    <property type="entry name" value="Kup"/>
</dbReference>
<dbReference type="PANTHER" id="PTHR30540">
    <property type="entry name" value="OSMOTIC STRESS POTASSIUM TRANSPORTER"/>
    <property type="match status" value="1"/>
</dbReference>
<dbReference type="PANTHER" id="PTHR30540:SF99">
    <property type="entry name" value="POTASSIUM TRANSPORTER"/>
    <property type="match status" value="1"/>
</dbReference>
<dbReference type="Pfam" id="PF02705">
    <property type="entry name" value="K_trans"/>
    <property type="match status" value="1"/>
</dbReference>
<dbReference type="Pfam" id="PF22776">
    <property type="entry name" value="K_trans_C"/>
    <property type="match status" value="1"/>
</dbReference>
<gene>
    <name evidence="1" type="primary">kup</name>
    <name type="ordered locus">Ldb0219</name>
</gene>
<reference key="1">
    <citation type="journal article" date="2006" name="Proc. Natl. Acad. Sci. U.S.A.">
        <title>The complete genome sequence of Lactobacillus bulgaricus reveals extensive and ongoing reductive evolution.</title>
        <authorList>
            <person name="van de Guchte M."/>
            <person name="Penaud S."/>
            <person name="Grimaldi C."/>
            <person name="Barbe V."/>
            <person name="Bryson K."/>
            <person name="Nicolas P."/>
            <person name="Robert C."/>
            <person name="Oztas S."/>
            <person name="Mangenot S."/>
            <person name="Couloux A."/>
            <person name="Loux V."/>
            <person name="Dervyn R."/>
            <person name="Bossy R."/>
            <person name="Bolotin A."/>
            <person name="Batto J.-M."/>
            <person name="Walunas T."/>
            <person name="Gibrat J.-F."/>
            <person name="Bessieres P."/>
            <person name="Weissenbach J."/>
            <person name="Ehrlich S.D."/>
            <person name="Maguin E."/>
        </authorList>
    </citation>
    <scope>NUCLEOTIDE SEQUENCE [LARGE SCALE GENOMIC DNA]</scope>
    <source>
        <strain>ATCC 11842 / DSM 20081 / BCRC 10696 / JCM 1002 / NBRC 13953 / NCIMB 11778 / NCTC 12712 / WDCM 00102 / Lb 14</strain>
    </source>
</reference>
<comment type="function">
    <text evidence="1">Transport of potassium into the cell. Likely operates as a K(+):H(+) symporter.</text>
</comment>
<comment type="catalytic activity">
    <reaction evidence="1">
        <text>K(+)(in) + H(+)(in) = K(+)(out) + H(+)(out)</text>
        <dbReference type="Rhea" id="RHEA:28490"/>
        <dbReference type="ChEBI" id="CHEBI:15378"/>
        <dbReference type="ChEBI" id="CHEBI:29103"/>
    </reaction>
    <physiologicalReaction direction="right-to-left" evidence="1">
        <dbReference type="Rhea" id="RHEA:28492"/>
    </physiologicalReaction>
</comment>
<comment type="subcellular location">
    <subcellularLocation>
        <location evidence="1">Cell membrane</location>
        <topology evidence="1">Multi-pass membrane protein</topology>
    </subcellularLocation>
</comment>
<comment type="similarity">
    <text evidence="1">Belongs to the HAK/KUP transporter (TC 2.A.72) family.</text>
</comment>
<evidence type="ECO:0000255" key="1">
    <source>
        <dbReference type="HAMAP-Rule" id="MF_01522"/>
    </source>
</evidence>
<proteinExistence type="inferred from homology"/>
<name>KUP_LACDA</name>
<feature type="chain" id="PRO_0000279791" description="Probable potassium transport system protein Kup">
    <location>
        <begin position="1"/>
        <end position="667"/>
    </location>
</feature>
<feature type="transmembrane region" description="Helical" evidence="1">
    <location>
        <begin position="5"/>
        <end position="25"/>
    </location>
</feature>
<feature type="transmembrane region" description="Helical" evidence="1">
    <location>
        <begin position="47"/>
        <end position="67"/>
    </location>
</feature>
<feature type="transmembrane region" description="Helical" evidence="1">
    <location>
        <begin position="88"/>
        <end position="108"/>
    </location>
</feature>
<feature type="transmembrane region" description="Helical" evidence="1">
    <location>
        <begin position="133"/>
        <end position="153"/>
    </location>
</feature>
<feature type="transmembrane region" description="Helical" evidence="1">
    <location>
        <begin position="164"/>
        <end position="184"/>
    </location>
</feature>
<feature type="transmembrane region" description="Helical" evidence="1">
    <location>
        <begin position="210"/>
        <end position="230"/>
    </location>
</feature>
<feature type="transmembrane region" description="Helical" evidence="1">
    <location>
        <begin position="243"/>
        <end position="263"/>
    </location>
</feature>
<feature type="transmembrane region" description="Helical" evidence="1">
    <location>
        <begin position="287"/>
        <end position="307"/>
    </location>
</feature>
<feature type="transmembrane region" description="Helical" evidence="1">
    <location>
        <begin position="336"/>
        <end position="356"/>
    </location>
</feature>
<feature type="transmembrane region" description="Helical" evidence="1">
    <location>
        <begin position="367"/>
        <end position="387"/>
    </location>
</feature>
<feature type="transmembrane region" description="Helical" evidence="1">
    <location>
        <begin position="393"/>
        <end position="413"/>
    </location>
</feature>
<feature type="transmembrane region" description="Helical" evidence="1">
    <location>
        <begin position="420"/>
        <end position="440"/>
    </location>
</feature>